<evidence type="ECO:0000255" key="1">
    <source>
        <dbReference type="HAMAP-Rule" id="MF_00300"/>
    </source>
</evidence>
<accession>A1WY16</accession>
<reference key="1">
    <citation type="submission" date="2006-12" db="EMBL/GenBank/DDBJ databases">
        <title>Complete sequence of Halorhodospira halophila SL1.</title>
        <authorList>
            <consortium name="US DOE Joint Genome Institute"/>
            <person name="Copeland A."/>
            <person name="Lucas S."/>
            <person name="Lapidus A."/>
            <person name="Barry K."/>
            <person name="Detter J.C."/>
            <person name="Glavina del Rio T."/>
            <person name="Hammon N."/>
            <person name="Israni S."/>
            <person name="Dalin E."/>
            <person name="Tice H."/>
            <person name="Pitluck S."/>
            <person name="Saunders E."/>
            <person name="Brettin T."/>
            <person name="Bruce D."/>
            <person name="Han C."/>
            <person name="Tapia R."/>
            <person name="Schmutz J."/>
            <person name="Larimer F."/>
            <person name="Land M."/>
            <person name="Hauser L."/>
            <person name="Kyrpides N."/>
            <person name="Mikhailova N."/>
            <person name="Hoff W."/>
            <person name="Richardson P."/>
        </authorList>
    </citation>
    <scope>NUCLEOTIDE SEQUENCE [LARGE SCALE GENOMIC DNA]</scope>
    <source>
        <strain>DSM 244 / SL1</strain>
    </source>
</reference>
<comment type="function">
    <text evidence="1">Catalyzes the anti-1,4-elimination of the C-3 phosphate and the C-6 proR hydrogen from 5-enolpyruvylshikimate-3-phosphate (EPSP) to yield chorismate, which is the branch point compound that serves as the starting substrate for the three terminal pathways of aromatic amino acid biosynthesis. This reaction introduces a second double bond into the aromatic ring system.</text>
</comment>
<comment type="catalytic activity">
    <reaction evidence="1">
        <text>5-O-(1-carboxyvinyl)-3-phosphoshikimate = chorismate + phosphate</text>
        <dbReference type="Rhea" id="RHEA:21020"/>
        <dbReference type="ChEBI" id="CHEBI:29748"/>
        <dbReference type="ChEBI" id="CHEBI:43474"/>
        <dbReference type="ChEBI" id="CHEBI:57701"/>
        <dbReference type="EC" id="4.2.3.5"/>
    </reaction>
</comment>
<comment type="cofactor">
    <cofactor evidence="1">
        <name>FMNH2</name>
        <dbReference type="ChEBI" id="CHEBI:57618"/>
    </cofactor>
    <text evidence="1">Reduced FMN (FMNH(2)).</text>
</comment>
<comment type="pathway">
    <text evidence="1">Metabolic intermediate biosynthesis; chorismate biosynthesis; chorismate from D-erythrose 4-phosphate and phosphoenolpyruvate: step 7/7.</text>
</comment>
<comment type="subunit">
    <text evidence="1">Homotetramer.</text>
</comment>
<comment type="similarity">
    <text evidence="1">Belongs to the chorismate synthase family.</text>
</comment>
<dbReference type="EC" id="4.2.3.5" evidence="1"/>
<dbReference type="EMBL" id="CP000544">
    <property type="protein sequence ID" value="ABM62578.1"/>
    <property type="molecule type" value="Genomic_DNA"/>
</dbReference>
<dbReference type="RefSeq" id="WP_011814600.1">
    <property type="nucleotide sequence ID" value="NC_008789.1"/>
</dbReference>
<dbReference type="SMR" id="A1WY16"/>
<dbReference type="STRING" id="349124.Hhal_1814"/>
<dbReference type="KEGG" id="hha:Hhal_1814"/>
<dbReference type="eggNOG" id="COG0082">
    <property type="taxonomic scope" value="Bacteria"/>
</dbReference>
<dbReference type="HOGENOM" id="CLU_034547_0_2_6"/>
<dbReference type="OrthoDB" id="9771806at2"/>
<dbReference type="UniPathway" id="UPA00053">
    <property type="reaction ID" value="UER00090"/>
</dbReference>
<dbReference type="Proteomes" id="UP000000647">
    <property type="component" value="Chromosome"/>
</dbReference>
<dbReference type="GO" id="GO:0005829">
    <property type="term" value="C:cytosol"/>
    <property type="evidence" value="ECO:0007669"/>
    <property type="project" value="TreeGrafter"/>
</dbReference>
<dbReference type="GO" id="GO:0004107">
    <property type="term" value="F:chorismate synthase activity"/>
    <property type="evidence" value="ECO:0007669"/>
    <property type="project" value="UniProtKB-UniRule"/>
</dbReference>
<dbReference type="GO" id="GO:0010181">
    <property type="term" value="F:FMN binding"/>
    <property type="evidence" value="ECO:0007669"/>
    <property type="project" value="TreeGrafter"/>
</dbReference>
<dbReference type="GO" id="GO:0008652">
    <property type="term" value="P:amino acid biosynthetic process"/>
    <property type="evidence" value="ECO:0007669"/>
    <property type="project" value="UniProtKB-KW"/>
</dbReference>
<dbReference type="GO" id="GO:0009073">
    <property type="term" value="P:aromatic amino acid family biosynthetic process"/>
    <property type="evidence" value="ECO:0007669"/>
    <property type="project" value="UniProtKB-KW"/>
</dbReference>
<dbReference type="GO" id="GO:0009423">
    <property type="term" value="P:chorismate biosynthetic process"/>
    <property type="evidence" value="ECO:0007669"/>
    <property type="project" value="UniProtKB-UniRule"/>
</dbReference>
<dbReference type="CDD" id="cd07304">
    <property type="entry name" value="Chorismate_synthase"/>
    <property type="match status" value="1"/>
</dbReference>
<dbReference type="FunFam" id="3.60.150.10:FF:000001">
    <property type="entry name" value="Chorismate synthase"/>
    <property type="match status" value="1"/>
</dbReference>
<dbReference type="Gene3D" id="3.60.150.10">
    <property type="entry name" value="Chorismate synthase AroC"/>
    <property type="match status" value="1"/>
</dbReference>
<dbReference type="HAMAP" id="MF_00300">
    <property type="entry name" value="Chorismate_synth"/>
    <property type="match status" value="1"/>
</dbReference>
<dbReference type="InterPro" id="IPR000453">
    <property type="entry name" value="Chorismate_synth"/>
</dbReference>
<dbReference type="InterPro" id="IPR035904">
    <property type="entry name" value="Chorismate_synth_AroC_sf"/>
</dbReference>
<dbReference type="InterPro" id="IPR020541">
    <property type="entry name" value="Chorismate_synthase_CS"/>
</dbReference>
<dbReference type="NCBIfam" id="TIGR00033">
    <property type="entry name" value="aroC"/>
    <property type="match status" value="1"/>
</dbReference>
<dbReference type="NCBIfam" id="NF003793">
    <property type="entry name" value="PRK05382.1"/>
    <property type="match status" value="1"/>
</dbReference>
<dbReference type="PANTHER" id="PTHR21085">
    <property type="entry name" value="CHORISMATE SYNTHASE"/>
    <property type="match status" value="1"/>
</dbReference>
<dbReference type="PANTHER" id="PTHR21085:SF0">
    <property type="entry name" value="CHORISMATE SYNTHASE"/>
    <property type="match status" value="1"/>
</dbReference>
<dbReference type="Pfam" id="PF01264">
    <property type="entry name" value="Chorismate_synt"/>
    <property type="match status" value="1"/>
</dbReference>
<dbReference type="PIRSF" id="PIRSF001456">
    <property type="entry name" value="Chorismate_synth"/>
    <property type="match status" value="1"/>
</dbReference>
<dbReference type="SUPFAM" id="SSF103263">
    <property type="entry name" value="Chorismate synthase, AroC"/>
    <property type="match status" value="1"/>
</dbReference>
<dbReference type="PROSITE" id="PS00787">
    <property type="entry name" value="CHORISMATE_SYNTHASE_1"/>
    <property type="match status" value="1"/>
</dbReference>
<dbReference type="PROSITE" id="PS00788">
    <property type="entry name" value="CHORISMATE_SYNTHASE_2"/>
    <property type="match status" value="1"/>
</dbReference>
<dbReference type="PROSITE" id="PS00789">
    <property type="entry name" value="CHORISMATE_SYNTHASE_3"/>
    <property type="match status" value="1"/>
</dbReference>
<proteinExistence type="inferred from homology"/>
<organism>
    <name type="scientific">Halorhodospira halophila (strain DSM 244 / SL1)</name>
    <name type="common">Ectothiorhodospira halophila (strain DSM 244 / SL1)</name>
    <dbReference type="NCBI Taxonomy" id="349124"/>
    <lineage>
        <taxon>Bacteria</taxon>
        <taxon>Pseudomonadati</taxon>
        <taxon>Pseudomonadota</taxon>
        <taxon>Gammaproteobacteria</taxon>
        <taxon>Chromatiales</taxon>
        <taxon>Ectothiorhodospiraceae</taxon>
        <taxon>Halorhodospira</taxon>
    </lineage>
</organism>
<keyword id="KW-0028">Amino-acid biosynthesis</keyword>
<keyword id="KW-0057">Aromatic amino acid biosynthesis</keyword>
<keyword id="KW-0274">FAD</keyword>
<keyword id="KW-0285">Flavoprotein</keyword>
<keyword id="KW-0288">FMN</keyword>
<keyword id="KW-0456">Lyase</keyword>
<keyword id="KW-0521">NADP</keyword>
<keyword id="KW-1185">Reference proteome</keyword>
<feature type="chain" id="PRO_0000322405" description="Chorismate synthase">
    <location>
        <begin position="1"/>
        <end position="367"/>
    </location>
</feature>
<feature type="binding site" evidence="1">
    <location>
        <position position="48"/>
    </location>
    <ligand>
        <name>NADP(+)</name>
        <dbReference type="ChEBI" id="CHEBI:58349"/>
    </ligand>
</feature>
<feature type="binding site" evidence="1">
    <location>
        <begin position="125"/>
        <end position="127"/>
    </location>
    <ligand>
        <name>FMN</name>
        <dbReference type="ChEBI" id="CHEBI:58210"/>
    </ligand>
</feature>
<feature type="binding site" evidence="1">
    <location>
        <begin position="238"/>
        <end position="239"/>
    </location>
    <ligand>
        <name>FMN</name>
        <dbReference type="ChEBI" id="CHEBI:58210"/>
    </ligand>
</feature>
<feature type="binding site" evidence="1">
    <location>
        <position position="278"/>
    </location>
    <ligand>
        <name>FMN</name>
        <dbReference type="ChEBI" id="CHEBI:58210"/>
    </ligand>
</feature>
<feature type="binding site" evidence="1">
    <location>
        <begin position="293"/>
        <end position="297"/>
    </location>
    <ligand>
        <name>FMN</name>
        <dbReference type="ChEBI" id="CHEBI:58210"/>
    </ligand>
</feature>
<feature type="binding site" evidence="1">
    <location>
        <position position="319"/>
    </location>
    <ligand>
        <name>FMN</name>
        <dbReference type="ChEBI" id="CHEBI:58210"/>
    </ligand>
</feature>
<sequence length="367" mass="38943">MSGNTFGTLFTVTTFGESHGPALGGVVDGCPPGLALTEADLQVELDRRRPGRSKHTTQRRESDQVQILSGVFEGVTTGTPIGLLIENTDQRSKDYSEIAQRFRPGHADYTYQQKYGVRDYRGGGRSSARETAVRVAAGAIARRYLAQRLGIEIRGRLAQMGGIELGAEDWSAVDDNDFFCADPARIPELEALIQEVRKAGDSVGAAVEVEVRHVPPGLGEPVFDRLDADLAKALMSINAVKGVEVGAGMAAAGQRGSAHRDELTPAGFAGNQSGGVLGGISSGQDLVVRAALKPTSSMLIPGRSVDVHGEPVSVVTKGRHDPCVGIRAVPIAEAMAALVVMDHWLRHRAQNADVESGTPVLPARDRE</sequence>
<name>AROC_HALHL</name>
<gene>
    <name evidence="1" type="primary">aroC</name>
    <name type="ordered locus">Hhal_1814</name>
</gene>
<protein>
    <recommendedName>
        <fullName evidence="1">Chorismate synthase</fullName>
        <shortName evidence="1">CS</shortName>
        <ecNumber evidence="1">4.2.3.5</ecNumber>
    </recommendedName>
    <alternativeName>
        <fullName evidence="1">5-enolpyruvylshikimate-3-phosphate phospholyase</fullName>
    </alternativeName>
</protein>